<evidence type="ECO:0000255" key="1">
    <source>
        <dbReference type="HAMAP-Rule" id="MF_02002"/>
    </source>
</evidence>
<dbReference type="EC" id="6.1.1.5" evidence="1"/>
<dbReference type="EMBL" id="CP001020">
    <property type="protein sequence ID" value="ACJ20809.1"/>
    <property type="molecule type" value="Genomic_DNA"/>
</dbReference>
<dbReference type="RefSeq" id="WP_005771964.1">
    <property type="nucleotide sequence ID" value="NC_011528.1"/>
</dbReference>
<dbReference type="SMR" id="B6J9J5"/>
<dbReference type="KEGG" id="cbc:CbuK_1665"/>
<dbReference type="HOGENOM" id="CLU_001493_7_0_6"/>
<dbReference type="GO" id="GO:0005829">
    <property type="term" value="C:cytosol"/>
    <property type="evidence" value="ECO:0007669"/>
    <property type="project" value="TreeGrafter"/>
</dbReference>
<dbReference type="GO" id="GO:0002161">
    <property type="term" value="F:aminoacyl-tRNA deacylase activity"/>
    <property type="evidence" value="ECO:0007669"/>
    <property type="project" value="InterPro"/>
</dbReference>
<dbReference type="GO" id="GO:0005524">
    <property type="term" value="F:ATP binding"/>
    <property type="evidence" value="ECO:0007669"/>
    <property type="project" value="UniProtKB-UniRule"/>
</dbReference>
<dbReference type="GO" id="GO:0004822">
    <property type="term" value="F:isoleucine-tRNA ligase activity"/>
    <property type="evidence" value="ECO:0007669"/>
    <property type="project" value="UniProtKB-UniRule"/>
</dbReference>
<dbReference type="GO" id="GO:0000049">
    <property type="term" value="F:tRNA binding"/>
    <property type="evidence" value="ECO:0007669"/>
    <property type="project" value="InterPro"/>
</dbReference>
<dbReference type="GO" id="GO:0008270">
    <property type="term" value="F:zinc ion binding"/>
    <property type="evidence" value="ECO:0007669"/>
    <property type="project" value="UniProtKB-UniRule"/>
</dbReference>
<dbReference type="GO" id="GO:0006428">
    <property type="term" value="P:isoleucyl-tRNA aminoacylation"/>
    <property type="evidence" value="ECO:0007669"/>
    <property type="project" value="UniProtKB-UniRule"/>
</dbReference>
<dbReference type="CDD" id="cd07960">
    <property type="entry name" value="Anticodon_Ia_Ile_BEm"/>
    <property type="match status" value="1"/>
</dbReference>
<dbReference type="CDD" id="cd00818">
    <property type="entry name" value="IleRS_core"/>
    <property type="match status" value="1"/>
</dbReference>
<dbReference type="FunFam" id="1.10.730.20:FF:000001">
    <property type="entry name" value="Isoleucine--tRNA ligase"/>
    <property type="match status" value="1"/>
</dbReference>
<dbReference type="FunFam" id="3.40.50.620:FF:000042">
    <property type="entry name" value="Isoleucine--tRNA ligase"/>
    <property type="match status" value="1"/>
</dbReference>
<dbReference type="FunFam" id="3.40.50.620:FF:000048">
    <property type="entry name" value="Isoleucine--tRNA ligase"/>
    <property type="match status" value="1"/>
</dbReference>
<dbReference type="FunFam" id="3.90.740.10:FF:000002">
    <property type="entry name" value="Isoleucine--tRNA ligase"/>
    <property type="match status" value="1"/>
</dbReference>
<dbReference type="Gene3D" id="1.10.730.20">
    <property type="match status" value="1"/>
</dbReference>
<dbReference type="Gene3D" id="3.40.50.620">
    <property type="entry name" value="HUPs"/>
    <property type="match status" value="2"/>
</dbReference>
<dbReference type="Gene3D" id="3.90.740.10">
    <property type="entry name" value="Valyl/Leucyl/Isoleucyl-tRNA synthetase, editing domain"/>
    <property type="match status" value="1"/>
</dbReference>
<dbReference type="HAMAP" id="MF_02002">
    <property type="entry name" value="Ile_tRNA_synth_type1"/>
    <property type="match status" value="1"/>
</dbReference>
<dbReference type="InterPro" id="IPR002300">
    <property type="entry name" value="aa-tRNA-synth_Ia"/>
</dbReference>
<dbReference type="InterPro" id="IPR033708">
    <property type="entry name" value="Anticodon_Ile_BEm"/>
</dbReference>
<dbReference type="InterPro" id="IPR002301">
    <property type="entry name" value="Ile-tRNA-ligase"/>
</dbReference>
<dbReference type="InterPro" id="IPR023585">
    <property type="entry name" value="Ile-tRNA-ligase_type1"/>
</dbReference>
<dbReference type="InterPro" id="IPR050081">
    <property type="entry name" value="Ile-tRNA_ligase"/>
</dbReference>
<dbReference type="InterPro" id="IPR013155">
    <property type="entry name" value="M/V/L/I-tRNA-synth_anticd-bd"/>
</dbReference>
<dbReference type="InterPro" id="IPR014729">
    <property type="entry name" value="Rossmann-like_a/b/a_fold"/>
</dbReference>
<dbReference type="InterPro" id="IPR009080">
    <property type="entry name" value="tRNAsynth_Ia_anticodon-bd"/>
</dbReference>
<dbReference type="InterPro" id="IPR009008">
    <property type="entry name" value="Val/Leu/Ile-tRNA-synth_edit"/>
</dbReference>
<dbReference type="InterPro" id="IPR010663">
    <property type="entry name" value="Znf_FPG/IleRS"/>
</dbReference>
<dbReference type="NCBIfam" id="TIGR00392">
    <property type="entry name" value="ileS"/>
    <property type="match status" value="1"/>
</dbReference>
<dbReference type="PANTHER" id="PTHR42765:SF1">
    <property type="entry name" value="ISOLEUCINE--TRNA LIGASE, MITOCHONDRIAL"/>
    <property type="match status" value="1"/>
</dbReference>
<dbReference type="PANTHER" id="PTHR42765">
    <property type="entry name" value="SOLEUCYL-TRNA SYNTHETASE"/>
    <property type="match status" value="1"/>
</dbReference>
<dbReference type="Pfam" id="PF08264">
    <property type="entry name" value="Anticodon_1"/>
    <property type="match status" value="1"/>
</dbReference>
<dbReference type="Pfam" id="PF00133">
    <property type="entry name" value="tRNA-synt_1"/>
    <property type="match status" value="1"/>
</dbReference>
<dbReference type="Pfam" id="PF06827">
    <property type="entry name" value="zf-FPG_IleRS"/>
    <property type="match status" value="1"/>
</dbReference>
<dbReference type="PRINTS" id="PR00984">
    <property type="entry name" value="TRNASYNTHILE"/>
</dbReference>
<dbReference type="SUPFAM" id="SSF47323">
    <property type="entry name" value="Anticodon-binding domain of a subclass of class I aminoacyl-tRNA synthetases"/>
    <property type="match status" value="1"/>
</dbReference>
<dbReference type="SUPFAM" id="SSF52374">
    <property type="entry name" value="Nucleotidylyl transferase"/>
    <property type="match status" value="1"/>
</dbReference>
<dbReference type="SUPFAM" id="SSF50677">
    <property type="entry name" value="ValRS/IleRS/LeuRS editing domain"/>
    <property type="match status" value="1"/>
</dbReference>
<sequence length="936" mass="106110">MTDYKDTLNLPQTDFPMRANLPEREPQTLARWQTLDLYRKIRKDREGQPKFILHDGPPYANGRAHLGTAFNKTLKDIVVKSKTLSGFDAPFVPGWDCHGLPIELNVEKKLGKDKLSANAFRQACRDYAFSQIELQRDDFQRLGVLGDWQHPYLTMDFGYEADTVRALAKIVANGHLLRGQKPVHWCAACGSALAEAEVEYRDKASPAVDVGFEAVDAEAVRQRFGVKNATTRVLVPIWTTTPWTLPANEAVSVHPELHYALVKSELQNQPVYLILAKDLVDSAMQRYGVDDYEVHGNLKGDALEGMQLQHPFLDRIVPIILGEHVTTEAGTGNVHTAPAHGLEDYFVAEKYNLPINNPVDARGRFIPDTFLVGGQPVFKANEPIIVLLADSGHLLHSETIQHSYPHCWRHKTPLIFRATPQWFIGMNKNGLRERALAEIEKVTWLPAWGEARIGKMVADRPDWCISRQRLWGIPIPLFIHKKSGELHPKSPALMEKVAQLIEKESVDAWFDLDPKVLLGDDADHYEKVTDVLDVWFDSGVTHFCVLEKRRELKVPADIYLEGSDQHRGWFQSSLLTSLAIRDKAPYKSVLTYGFVVDSQGRKMSKSLGNVILPADVVKNLGADVLRLWAASMDYTVEVNVSDEILKRASDAYRRIRNTARFLLSNLYDFDPKKDKVAVDQLVALDRWAIFTTQKLQEKIITAYDRYRFPAIYQAIHNFCTVEMGSFYLDIIKDRLYTSKESGLPRRSAQTALYYIAEAFVRWIAPIISFTADEIWQFMPGDREPSVFLTQWFSDFPNAALSGEEEQRWQLLLQIRDEVNKALETYRNEGKIGSALAAEVVLYADERLNAAIATLGEELRFVLITSEASVLPFNEKSKAAFDTALPGLALEINVSEFEKCARCWQRRSSVGQIKEHADLCDRCVSNAFEDGEMRQFA</sequence>
<name>SYI_COXB1</name>
<comment type="function">
    <text evidence="1">Catalyzes the attachment of isoleucine to tRNA(Ile). As IleRS can inadvertently accommodate and process structurally similar amino acids such as valine, to avoid such errors it has two additional distinct tRNA(Ile)-dependent editing activities. One activity is designated as 'pretransfer' editing and involves the hydrolysis of activated Val-AMP. The other activity is designated 'posttransfer' editing and involves deacylation of mischarged Val-tRNA(Ile).</text>
</comment>
<comment type="catalytic activity">
    <reaction evidence="1">
        <text>tRNA(Ile) + L-isoleucine + ATP = L-isoleucyl-tRNA(Ile) + AMP + diphosphate</text>
        <dbReference type="Rhea" id="RHEA:11060"/>
        <dbReference type="Rhea" id="RHEA-COMP:9666"/>
        <dbReference type="Rhea" id="RHEA-COMP:9695"/>
        <dbReference type="ChEBI" id="CHEBI:30616"/>
        <dbReference type="ChEBI" id="CHEBI:33019"/>
        <dbReference type="ChEBI" id="CHEBI:58045"/>
        <dbReference type="ChEBI" id="CHEBI:78442"/>
        <dbReference type="ChEBI" id="CHEBI:78528"/>
        <dbReference type="ChEBI" id="CHEBI:456215"/>
        <dbReference type="EC" id="6.1.1.5"/>
    </reaction>
</comment>
<comment type="cofactor">
    <cofactor evidence="1">
        <name>Zn(2+)</name>
        <dbReference type="ChEBI" id="CHEBI:29105"/>
    </cofactor>
    <text evidence="1">Binds 1 zinc ion per subunit.</text>
</comment>
<comment type="subunit">
    <text evidence="1">Monomer.</text>
</comment>
<comment type="subcellular location">
    <subcellularLocation>
        <location evidence="1">Cytoplasm</location>
    </subcellularLocation>
</comment>
<comment type="domain">
    <text evidence="1">IleRS has two distinct active sites: one for aminoacylation and one for editing. The misactivated valine is translocated from the active site to the editing site, which sterically excludes the correctly activated isoleucine. The single editing site contains two valyl binding pockets, one specific for each substrate (Val-AMP or Val-tRNA(Ile)).</text>
</comment>
<comment type="similarity">
    <text evidence="1">Belongs to the class-I aminoacyl-tRNA synthetase family. IleS type 1 subfamily.</text>
</comment>
<protein>
    <recommendedName>
        <fullName evidence="1">Isoleucine--tRNA ligase</fullName>
        <ecNumber evidence="1">6.1.1.5</ecNumber>
    </recommendedName>
    <alternativeName>
        <fullName evidence="1">Isoleucyl-tRNA synthetase</fullName>
        <shortName evidence="1">IleRS</shortName>
    </alternativeName>
</protein>
<organism>
    <name type="scientific">Coxiella burnetii (strain CbuK_Q154)</name>
    <name type="common">Coxiella burnetii (strain Q154)</name>
    <dbReference type="NCBI Taxonomy" id="434924"/>
    <lineage>
        <taxon>Bacteria</taxon>
        <taxon>Pseudomonadati</taxon>
        <taxon>Pseudomonadota</taxon>
        <taxon>Gammaproteobacteria</taxon>
        <taxon>Legionellales</taxon>
        <taxon>Coxiellaceae</taxon>
        <taxon>Coxiella</taxon>
    </lineage>
</organism>
<gene>
    <name evidence="1" type="primary">ileS</name>
    <name type="ordered locus">CbuK_1665</name>
</gene>
<accession>B6J9J5</accession>
<reference key="1">
    <citation type="journal article" date="2009" name="Infect. Immun.">
        <title>Comparative genomics reveal extensive transposon-mediated genomic plasticity and diversity among potential effector proteins within the genus Coxiella.</title>
        <authorList>
            <person name="Beare P.A."/>
            <person name="Unsworth N."/>
            <person name="Andoh M."/>
            <person name="Voth D.E."/>
            <person name="Omsland A."/>
            <person name="Gilk S.D."/>
            <person name="Williams K.P."/>
            <person name="Sobral B.W."/>
            <person name="Kupko J.J. III"/>
            <person name="Porcella S.F."/>
            <person name="Samuel J.E."/>
            <person name="Heinzen R.A."/>
        </authorList>
    </citation>
    <scope>NUCLEOTIDE SEQUENCE [LARGE SCALE GENOMIC DNA]</scope>
    <source>
        <strain>CbuK_Q154</strain>
    </source>
</reference>
<keyword id="KW-0030">Aminoacyl-tRNA synthetase</keyword>
<keyword id="KW-0067">ATP-binding</keyword>
<keyword id="KW-0963">Cytoplasm</keyword>
<keyword id="KW-0436">Ligase</keyword>
<keyword id="KW-0479">Metal-binding</keyword>
<keyword id="KW-0547">Nucleotide-binding</keyword>
<keyword id="KW-0648">Protein biosynthesis</keyword>
<keyword id="KW-0862">Zinc</keyword>
<proteinExistence type="inferred from homology"/>
<feature type="chain" id="PRO_1000189142" description="Isoleucine--tRNA ligase">
    <location>
        <begin position="1"/>
        <end position="936"/>
    </location>
</feature>
<feature type="short sequence motif" description="'HIGH' region">
    <location>
        <begin position="58"/>
        <end position="68"/>
    </location>
</feature>
<feature type="short sequence motif" description="'KMSKS' region">
    <location>
        <begin position="602"/>
        <end position="606"/>
    </location>
</feature>
<feature type="binding site" evidence="1">
    <location>
        <position position="561"/>
    </location>
    <ligand>
        <name>L-isoleucyl-5'-AMP</name>
        <dbReference type="ChEBI" id="CHEBI:178002"/>
    </ligand>
</feature>
<feature type="binding site" evidence="1">
    <location>
        <position position="605"/>
    </location>
    <ligand>
        <name>ATP</name>
        <dbReference type="ChEBI" id="CHEBI:30616"/>
    </ligand>
</feature>
<feature type="binding site" evidence="1">
    <location>
        <position position="899"/>
    </location>
    <ligand>
        <name>Zn(2+)</name>
        <dbReference type="ChEBI" id="CHEBI:29105"/>
    </ligand>
</feature>
<feature type="binding site" evidence="1">
    <location>
        <position position="902"/>
    </location>
    <ligand>
        <name>Zn(2+)</name>
        <dbReference type="ChEBI" id="CHEBI:29105"/>
    </ligand>
</feature>
<feature type="binding site" evidence="1">
    <location>
        <position position="919"/>
    </location>
    <ligand>
        <name>Zn(2+)</name>
        <dbReference type="ChEBI" id="CHEBI:29105"/>
    </ligand>
</feature>
<feature type="binding site" evidence="1">
    <location>
        <position position="922"/>
    </location>
    <ligand>
        <name>Zn(2+)</name>
        <dbReference type="ChEBI" id="CHEBI:29105"/>
    </ligand>
</feature>